<organism>
    <name type="scientific">Legionella pneumophila subsp. pneumophila (strain Philadelphia 1 / ATCC 33152 / DSM 7513)</name>
    <dbReference type="NCBI Taxonomy" id="272624"/>
    <lineage>
        <taxon>Bacteria</taxon>
        <taxon>Pseudomonadati</taxon>
        <taxon>Pseudomonadota</taxon>
        <taxon>Gammaproteobacteria</taxon>
        <taxon>Legionellales</taxon>
        <taxon>Legionellaceae</taxon>
        <taxon>Legionella</taxon>
    </lineage>
</organism>
<protein>
    <recommendedName>
        <fullName evidence="1">Tryptophan synthase alpha chain</fullName>
        <ecNumber evidence="1">4.2.1.20</ecNumber>
    </recommendedName>
</protein>
<sequence length="272" mass="29937">MNRIDKTLEKLKANRKKMLSPYITAGDPYPELTVSLMHQLVKSGADVLELGIPFSDPMAEGPVIQRAMERALAHSIHCDDVLNMVRQFRKTDTETPVILMGYLNPIEQYGYDLFAQQAVEAGVDGTILVDLPPEEADGVSRVWQKHGLYSIYLCSPTTSAERMNYINQHANGYLYYVSLKGVTGSDALKLPELKAQYLQRKAQSKLPLMVGFGIKTPEMAAQVAEFADGVIVGAALINEIIEAYEAKKDPLQASGALLSSMRQAIDNIGSMV</sequence>
<evidence type="ECO:0000255" key="1">
    <source>
        <dbReference type="HAMAP-Rule" id="MF_00131"/>
    </source>
</evidence>
<evidence type="ECO:0007829" key="2">
    <source>
        <dbReference type="PDB" id="5K9X"/>
    </source>
</evidence>
<gene>
    <name evidence="1" type="primary">trpA</name>
    <name type="ordered locus">lpg1305</name>
</gene>
<comment type="function">
    <text evidence="1">The alpha subunit is responsible for the aldol cleavage of indoleglycerol phosphate to indole and glyceraldehyde 3-phosphate.</text>
</comment>
<comment type="catalytic activity">
    <reaction evidence="1">
        <text>(1S,2R)-1-C-(indol-3-yl)glycerol 3-phosphate + L-serine = D-glyceraldehyde 3-phosphate + L-tryptophan + H2O</text>
        <dbReference type="Rhea" id="RHEA:10532"/>
        <dbReference type="ChEBI" id="CHEBI:15377"/>
        <dbReference type="ChEBI" id="CHEBI:33384"/>
        <dbReference type="ChEBI" id="CHEBI:57912"/>
        <dbReference type="ChEBI" id="CHEBI:58866"/>
        <dbReference type="ChEBI" id="CHEBI:59776"/>
        <dbReference type="EC" id="4.2.1.20"/>
    </reaction>
</comment>
<comment type="pathway">
    <text evidence="1">Amino-acid biosynthesis; L-tryptophan biosynthesis; L-tryptophan from chorismate: step 5/5.</text>
</comment>
<comment type="subunit">
    <text evidence="1">Tetramer of two alpha and two beta chains.</text>
</comment>
<comment type="similarity">
    <text evidence="1">Belongs to the TrpA family.</text>
</comment>
<accession>Q5ZVY3</accession>
<keyword id="KW-0002">3D-structure</keyword>
<keyword id="KW-0028">Amino-acid biosynthesis</keyword>
<keyword id="KW-0057">Aromatic amino acid biosynthesis</keyword>
<keyword id="KW-0456">Lyase</keyword>
<keyword id="KW-1185">Reference proteome</keyword>
<keyword id="KW-0822">Tryptophan biosynthesis</keyword>
<reference key="1">
    <citation type="journal article" date="2004" name="Science">
        <title>The genomic sequence of the accidental pathogen Legionella pneumophila.</title>
        <authorList>
            <person name="Chien M."/>
            <person name="Morozova I."/>
            <person name="Shi S."/>
            <person name="Sheng H."/>
            <person name="Chen J."/>
            <person name="Gomez S.M."/>
            <person name="Asamani G."/>
            <person name="Hill K."/>
            <person name="Nuara J."/>
            <person name="Feder M."/>
            <person name="Rineer J."/>
            <person name="Greenberg J.J."/>
            <person name="Steshenko V."/>
            <person name="Park S.H."/>
            <person name="Zhao B."/>
            <person name="Teplitskaya E."/>
            <person name="Edwards J.R."/>
            <person name="Pampou S."/>
            <person name="Georghiou A."/>
            <person name="Chou I.-C."/>
            <person name="Iannuccilli W."/>
            <person name="Ulz M.E."/>
            <person name="Kim D.H."/>
            <person name="Geringer-Sameth A."/>
            <person name="Goldsberry C."/>
            <person name="Morozov P."/>
            <person name="Fischer S.G."/>
            <person name="Segal G."/>
            <person name="Qu X."/>
            <person name="Rzhetsky A."/>
            <person name="Zhang P."/>
            <person name="Cayanis E."/>
            <person name="De Jong P.J."/>
            <person name="Ju J."/>
            <person name="Kalachikov S."/>
            <person name="Shuman H.A."/>
            <person name="Russo J.J."/>
        </authorList>
    </citation>
    <scope>NUCLEOTIDE SEQUENCE [LARGE SCALE GENOMIC DNA]</scope>
    <source>
        <strain>Philadelphia 1 / ATCC 33152 / DSM 7513</strain>
    </source>
</reference>
<proteinExistence type="evidence at protein level"/>
<feature type="chain" id="PRO_0000098797" description="Tryptophan synthase alpha chain">
    <location>
        <begin position="1"/>
        <end position="272"/>
    </location>
</feature>
<feature type="active site" description="Proton acceptor" evidence="1">
    <location>
        <position position="49"/>
    </location>
</feature>
<feature type="active site" description="Proton acceptor" evidence="1">
    <location>
        <position position="60"/>
    </location>
</feature>
<feature type="helix" evidence="2">
    <location>
        <begin position="3"/>
        <end position="13"/>
    </location>
</feature>
<feature type="strand" evidence="2">
    <location>
        <begin position="18"/>
        <end position="24"/>
    </location>
</feature>
<feature type="helix" evidence="2">
    <location>
        <begin position="30"/>
        <end position="32"/>
    </location>
</feature>
<feature type="helix" evidence="2">
    <location>
        <begin position="33"/>
        <end position="42"/>
    </location>
</feature>
<feature type="strand" evidence="2">
    <location>
        <begin position="46"/>
        <end position="51"/>
    </location>
</feature>
<feature type="helix" evidence="2">
    <location>
        <begin position="62"/>
        <end position="72"/>
    </location>
</feature>
<feature type="turn" evidence="2">
    <location>
        <begin position="73"/>
        <end position="75"/>
    </location>
</feature>
<feature type="helix" evidence="2">
    <location>
        <begin position="78"/>
        <end position="89"/>
    </location>
</feature>
<feature type="strand" evidence="2">
    <location>
        <begin position="93"/>
        <end position="95"/>
    </location>
</feature>
<feature type="strand" evidence="2">
    <location>
        <begin position="97"/>
        <end position="101"/>
    </location>
</feature>
<feature type="helix" evidence="2">
    <location>
        <begin position="103"/>
        <end position="109"/>
    </location>
</feature>
<feature type="helix" evidence="2">
    <location>
        <begin position="111"/>
        <end position="121"/>
    </location>
</feature>
<feature type="strand" evidence="2">
    <location>
        <begin position="125"/>
        <end position="128"/>
    </location>
</feature>
<feature type="helix" evidence="2">
    <location>
        <begin position="133"/>
        <end position="135"/>
    </location>
</feature>
<feature type="helix" evidence="2">
    <location>
        <begin position="137"/>
        <end position="145"/>
    </location>
</feature>
<feature type="helix" evidence="2">
    <location>
        <begin position="160"/>
        <end position="169"/>
    </location>
</feature>
<feature type="strand" evidence="2">
    <location>
        <begin position="174"/>
        <end position="176"/>
    </location>
</feature>
<feature type="helix" evidence="2">
    <location>
        <begin position="190"/>
        <end position="201"/>
    </location>
</feature>
<feature type="strand" evidence="2">
    <location>
        <begin position="208"/>
        <end position="210"/>
    </location>
</feature>
<feature type="helix" evidence="2">
    <location>
        <begin position="217"/>
        <end position="224"/>
    </location>
</feature>
<feature type="strand" evidence="2">
    <location>
        <begin position="227"/>
        <end position="232"/>
    </location>
</feature>
<feature type="helix" evidence="2">
    <location>
        <begin position="235"/>
        <end position="245"/>
    </location>
</feature>
<feature type="helix" evidence="2">
    <location>
        <begin position="250"/>
        <end position="266"/>
    </location>
</feature>
<feature type="turn" evidence="2">
    <location>
        <begin position="267"/>
        <end position="269"/>
    </location>
</feature>
<name>TRPA_LEGPH</name>
<dbReference type="EC" id="4.2.1.20" evidence="1"/>
<dbReference type="EMBL" id="AE017354">
    <property type="protein sequence ID" value="AAU27388.1"/>
    <property type="molecule type" value="Genomic_DNA"/>
</dbReference>
<dbReference type="RefSeq" id="WP_010947036.1">
    <property type="nucleotide sequence ID" value="NC_002942.5"/>
</dbReference>
<dbReference type="RefSeq" id="YP_095335.1">
    <property type="nucleotide sequence ID" value="NC_002942.5"/>
</dbReference>
<dbReference type="PDB" id="5K9X">
    <property type="method" value="X-ray"/>
    <property type="resolution" value="2.02 A"/>
    <property type="chains" value="A=1-272"/>
</dbReference>
<dbReference type="PDBsum" id="5K9X"/>
<dbReference type="SMR" id="Q5ZVY3"/>
<dbReference type="STRING" id="272624.lpg1305"/>
<dbReference type="PaxDb" id="272624-lpg1305"/>
<dbReference type="GeneID" id="57035298"/>
<dbReference type="KEGG" id="lpn:lpg1305"/>
<dbReference type="PATRIC" id="fig|272624.6.peg.1375"/>
<dbReference type="eggNOG" id="COG0159">
    <property type="taxonomic scope" value="Bacteria"/>
</dbReference>
<dbReference type="HOGENOM" id="CLU_016734_0_0_6"/>
<dbReference type="OrthoDB" id="9804578at2"/>
<dbReference type="UniPathway" id="UPA00035">
    <property type="reaction ID" value="UER00044"/>
</dbReference>
<dbReference type="EvolutionaryTrace" id="Q5ZVY3"/>
<dbReference type="Proteomes" id="UP000000609">
    <property type="component" value="Chromosome"/>
</dbReference>
<dbReference type="GO" id="GO:0005829">
    <property type="term" value="C:cytosol"/>
    <property type="evidence" value="ECO:0007669"/>
    <property type="project" value="TreeGrafter"/>
</dbReference>
<dbReference type="GO" id="GO:0004834">
    <property type="term" value="F:tryptophan synthase activity"/>
    <property type="evidence" value="ECO:0007669"/>
    <property type="project" value="UniProtKB-UniRule"/>
</dbReference>
<dbReference type="CDD" id="cd04724">
    <property type="entry name" value="Tryptophan_synthase_alpha"/>
    <property type="match status" value="1"/>
</dbReference>
<dbReference type="FunFam" id="3.20.20.70:FF:000037">
    <property type="entry name" value="Tryptophan synthase alpha chain"/>
    <property type="match status" value="1"/>
</dbReference>
<dbReference type="Gene3D" id="3.20.20.70">
    <property type="entry name" value="Aldolase class I"/>
    <property type="match status" value="1"/>
</dbReference>
<dbReference type="HAMAP" id="MF_00131">
    <property type="entry name" value="Trp_synth_alpha"/>
    <property type="match status" value="1"/>
</dbReference>
<dbReference type="InterPro" id="IPR013785">
    <property type="entry name" value="Aldolase_TIM"/>
</dbReference>
<dbReference type="InterPro" id="IPR011060">
    <property type="entry name" value="RibuloseP-bd_barrel"/>
</dbReference>
<dbReference type="InterPro" id="IPR018204">
    <property type="entry name" value="Trp_synthase_alpha_AS"/>
</dbReference>
<dbReference type="InterPro" id="IPR002028">
    <property type="entry name" value="Trp_synthase_suA"/>
</dbReference>
<dbReference type="NCBIfam" id="TIGR00262">
    <property type="entry name" value="trpA"/>
    <property type="match status" value="1"/>
</dbReference>
<dbReference type="PANTHER" id="PTHR43406:SF1">
    <property type="entry name" value="TRYPTOPHAN SYNTHASE ALPHA CHAIN, CHLOROPLASTIC"/>
    <property type="match status" value="1"/>
</dbReference>
<dbReference type="PANTHER" id="PTHR43406">
    <property type="entry name" value="TRYPTOPHAN SYNTHASE, ALPHA CHAIN"/>
    <property type="match status" value="1"/>
</dbReference>
<dbReference type="Pfam" id="PF00290">
    <property type="entry name" value="Trp_syntA"/>
    <property type="match status" value="1"/>
</dbReference>
<dbReference type="SUPFAM" id="SSF51366">
    <property type="entry name" value="Ribulose-phoshate binding barrel"/>
    <property type="match status" value="1"/>
</dbReference>
<dbReference type="PROSITE" id="PS00167">
    <property type="entry name" value="TRP_SYNTHASE_ALPHA"/>
    <property type="match status" value="1"/>
</dbReference>